<organism>
    <name type="scientific">Campylobacter jejuni (strain RM1221)</name>
    <dbReference type="NCBI Taxonomy" id="195099"/>
    <lineage>
        <taxon>Bacteria</taxon>
        <taxon>Pseudomonadati</taxon>
        <taxon>Campylobacterota</taxon>
        <taxon>Epsilonproteobacteria</taxon>
        <taxon>Campylobacterales</taxon>
        <taxon>Campylobacteraceae</taxon>
        <taxon>Campylobacter</taxon>
    </lineage>
</organism>
<proteinExistence type="inferred from homology"/>
<name>HEM1_CAMJR</name>
<feature type="chain" id="PRO_0000114003" description="Glutamyl-tRNA reductase">
    <location>
        <begin position="1"/>
        <end position="432"/>
    </location>
</feature>
<feature type="active site" description="Nucleophile" evidence="1">
    <location>
        <position position="50"/>
    </location>
</feature>
<feature type="binding site" evidence="1">
    <location>
        <begin position="49"/>
        <end position="52"/>
    </location>
    <ligand>
        <name>substrate</name>
    </ligand>
</feature>
<feature type="binding site" evidence="1">
    <location>
        <position position="107"/>
    </location>
    <ligand>
        <name>substrate</name>
    </ligand>
</feature>
<feature type="binding site" evidence="1">
    <location>
        <begin position="112"/>
        <end position="114"/>
    </location>
    <ligand>
        <name>substrate</name>
    </ligand>
</feature>
<feature type="binding site" evidence="1">
    <location>
        <position position="118"/>
    </location>
    <ligand>
        <name>substrate</name>
    </ligand>
</feature>
<feature type="binding site" evidence="1">
    <location>
        <begin position="186"/>
        <end position="191"/>
    </location>
    <ligand>
        <name>NADP(+)</name>
        <dbReference type="ChEBI" id="CHEBI:58349"/>
    </ligand>
</feature>
<feature type="site" description="Important for activity" evidence="1">
    <location>
        <position position="97"/>
    </location>
</feature>
<protein>
    <recommendedName>
        <fullName evidence="1">Glutamyl-tRNA reductase</fullName>
        <shortName evidence="1">GluTR</shortName>
        <ecNumber evidence="1">1.2.1.70</ecNumber>
    </recommendedName>
</protein>
<sequence length="432" mass="48755">MYYCISFTHKNTDIALREKLSFSNEAKKSEFLKIISTHENIEECLVISTCNRVEIVAFVKMACAEFIVKSLALLCDVDKDILLEKADIFEDSGAIHHLFSVASSLDSLVVGETQIAGQLKDAFAFAVKNNFCGVHLSRAVHSAFKCAAKVRNETQISKNSISVASVAVAKAKELADLTQKKAVVIGAGEMGELVAKHLIAAGAKVIILNRDLQKAKDLCERLGVLSEYDSLENLKKYLNQYEFFFSATNAPNAIITNSLIEELSYKRYFFDIAVPRDIDINENENISVFAVDDLEIVVQKNLALREQEARMAYGIIGRETSEFFRYLNDLALMPIIKAIRLQAKEYADKQLEIALKKGYLKKSDKEEARKLIHQVFKAFLHTPTVNLKHLQGKMQSDTVINAMRYVFDLQNNLEGLNQYKCEFDMENNDEIY</sequence>
<dbReference type="EC" id="1.2.1.70" evidence="1"/>
<dbReference type="EMBL" id="CP000025">
    <property type="protein sequence ID" value="AAW35841.1"/>
    <property type="molecule type" value="Genomic_DNA"/>
</dbReference>
<dbReference type="RefSeq" id="WP_011049734.1">
    <property type="nucleotide sequence ID" value="NC_003912.7"/>
</dbReference>
<dbReference type="SMR" id="Q5HVM4"/>
<dbReference type="KEGG" id="cjr:CJE0646"/>
<dbReference type="HOGENOM" id="CLU_035113_2_2_7"/>
<dbReference type="UniPathway" id="UPA00251">
    <property type="reaction ID" value="UER00316"/>
</dbReference>
<dbReference type="GO" id="GO:0008883">
    <property type="term" value="F:glutamyl-tRNA reductase activity"/>
    <property type="evidence" value="ECO:0007669"/>
    <property type="project" value="UniProtKB-UniRule"/>
</dbReference>
<dbReference type="GO" id="GO:0050661">
    <property type="term" value="F:NADP binding"/>
    <property type="evidence" value="ECO:0007669"/>
    <property type="project" value="InterPro"/>
</dbReference>
<dbReference type="GO" id="GO:0019353">
    <property type="term" value="P:protoporphyrinogen IX biosynthetic process from glutamate"/>
    <property type="evidence" value="ECO:0007669"/>
    <property type="project" value="TreeGrafter"/>
</dbReference>
<dbReference type="CDD" id="cd05213">
    <property type="entry name" value="NAD_bind_Glutamyl_tRNA_reduct"/>
    <property type="match status" value="1"/>
</dbReference>
<dbReference type="FunFam" id="3.30.460.30:FF:000001">
    <property type="entry name" value="Glutamyl-tRNA reductase"/>
    <property type="match status" value="1"/>
</dbReference>
<dbReference type="Gene3D" id="3.30.460.30">
    <property type="entry name" value="Glutamyl-tRNA reductase, N-terminal domain"/>
    <property type="match status" value="1"/>
</dbReference>
<dbReference type="Gene3D" id="3.40.50.720">
    <property type="entry name" value="NAD(P)-binding Rossmann-like Domain"/>
    <property type="match status" value="1"/>
</dbReference>
<dbReference type="HAMAP" id="MF_00087">
    <property type="entry name" value="Glu_tRNA_reductase"/>
    <property type="match status" value="1"/>
</dbReference>
<dbReference type="InterPro" id="IPR000343">
    <property type="entry name" value="4pyrrol_synth_GluRdtase"/>
</dbReference>
<dbReference type="InterPro" id="IPR015896">
    <property type="entry name" value="4pyrrol_synth_GluRdtase_dimer"/>
</dbReference>
<dbReference type="InterPro" id="IPR015895">
    <property type="entry name" value="4pyrrol_synth_GluRdtase_N"/>
</dbReference>
<dbReference type="InterPro" id="IPR018214">
    <property type="entry name" value="GluRdtase_CS"/>
</dbReference>
<dbReference type="InterPro" id="IPR036453">
    <property type="entry name" value="GluRdtase_dimer_dom_sf"/>
</dbReference>
<dbReference type="InterPro" id="IPR036343">
    <property type="entry name" value="GluRdtase_N_sf"/>
</dbReference>
<dbReference type="InterPro" id="IPR036291">
    <property type="entry name" value="NAD(P)-bd_dom_sf"/>
</dbReference>
<dbReference type="InterPro" id="IPR006151">
    <property type="entry name" value="Shikm_DH/Glu-tRNA_Rdtase"/>
</dbReference>
<dbReference type="NCBIfam" id="TIGR01035">
    <property type="entry name" value="hemA"/>
    <property type="match status" value="1"/>
</dbReference>
<dbReference type="PANTHER" id="PTHR43013">
    <property type="entry name" value="GLUTAMYL-TRNA REDUCTASE"/>
    <property type="match status" value="1"/>
</dbReference>
<dbReference type="PANTHER" id="PTHR43013:SF1">
    <property type="entry name" value="GLUTAMYL-TRNA REDUCTASE"/>
    <property type="match status" value="1"/>
</dbReference>
<dbReference type="Pfam" id="PF00745">
    <property type="entry name" value="GlutR_dimer"/>
    <property type="match status" value="1"/>
</dbReference>
<dbReference type="Pfam" id="PF05201">
    <property type="entry name" value="GlutR_N"/>
    <property type="match status" value="1"/>
</dbReference>
<dbReference type="Pfam" id="PF01488">
    <property type="entry name" value="Shikimate_DH"/>
    <property type="match status" value="1"/>
</dbReference>
<dbReference type="PIRSF" id="PIRSF000445">
    <property type="entry name" value="4pyrrol_synth_GluRdtase"/>
    <property type="match status" value="1"/>
</dbReference>
<dbReference type="SUPFAM" id="SSF69742">
    <property type="entry name" value="Glutamyl tRNA-reductase catalytic, N-terminal domain"/>
    <property type="match status" value="1"/>
</dbReference>
<dbReference type="SUPFAM" id="SSF69075">
    <property type="entry name" value="Glutamyl tRNA-reductase dimerization domain"/>
    <property type="match status" value="1"/>
</dbReference>
<dbReference type="SUPFAM" id="SSF51735">
    <property type="entry name" value="NAD(P)-binding Rossmann-fold domains"/>
    <property type="match status" value="1"/>
</dbReference>
<dbReference type="PROSITE" id="PS00747">
    <property type="entry name" value="GLUTR"/>
    <property type="match status" value="1"/>
</dbReference>
<reference key="1">
    <citation type="journal article" date="2005" name="PLoS Biol.">
        <title>Major structural differences and novel potential virulence mechanisms from the genomes of multiple Campylobacter species.</title>
        <authorList>
            <person name="Fouts D.E."/>
            <person name="Mongodin E.F."/>
            <person name="Mandrell R.E."/>
            <person name="Miller W.G."/>
            <person name="Rasko D.A."/>
            <person name="Ravel J."/>
            <person name="Brinkac L.M."/>
            <person name="DeBoy R.T."/>
            <person name="Parker C.T."/>
            <person name="Daugherty S.C."/>
            <person name="Dodson R.J."/>
            <person name="Durkin A.S."/>
            <person name="Madupu R."/>
            <person name="Sullivan S.A."/>
            <person name="Shetty J.U."/>
            <person name="Ayodeji M.A."/>
            <person name="Shvartsbeyn A."/>
            <person name="Schatz M.C."/>
            <person name="Badger J.H."/>
            <person name="Fraser C.M."/>
            <person name="Nelson K.E."/>
        </authorList>
    </citation>
    <scope>NUCLEOTIDE SEQUENCE [LARGE SCALE GENOMIC DNA]</scope>
    <source>
        <strain>RM1221</strain>
    </source>
</reference>
<gene>
    <name evidence="1" type="primary">hemA</name>
    <name type="ordered locus">CJE0646</name>
</gene>
<keyword id="KW-0521">NADP</keyword>
<keyword id="KW-0560">Oxidoreductase</keyword>
<keyword id="KW-0627">Porphyrin biosynthesis</keyword>
<comment type="function">
    <text evidence="1">Catalyzes the NADPH-dependent reduction of glutamyl-tRNA(Glu) to glutamate 1-semialdehyde (GSA).</text>
</comment>
<comment type="catalytic activity">
    <reaction evidence="1">
        <text>(S)-4-amino-5-oxopentanoate + tRNA(Glu) + NADP(+) = L-glutamyl-tRNA(Glu) + NADPH + H(+)</text>
        <dbReference type="Rhea" id="RHEA:12344"/>
        <dbReference type="Rhea" id="RHEA-COMP:9663"/>
        <dbReference type="Rhea" id="RHEA-COMP:9680"/>
        <dbReference type="ChEBI" id="CHEBI:15378"/>
        <dbReference type="ChEBI" id="CHEBI:57501"/>
        <dbReference type="ChEBI" id="CHEBI:57783"/>
        <dbReference type="ChEBI" id="CHEBI:58349"/>
        <dbReference type="ChEBI" id="CHEBI:78442"/>
        <dbReference type="ChEBI" id="CHEBI:78520"/>
        <dbReference type="EC" id="1.2.1.70"/>
    </reaction>
</comment>
<comment type="pathway">
    <text evidence="1">Porphyrin-containing compound metabolism; protoporphyrin-IX biosynthesis; 5-aminolevulinate from L-glutamyl-tRNA(Glu): step 1/2.</text>
</comment>
<comment type="subunit">
    <text evidence="1">Homodimer.</text>
</comment>
<comment type="domain">
    <text evidence="1">Possesses an unusual extended V-shaped dimeric structure with each monomer consisting of three distinct domains arranged along a curved 'spinal' alpha-helix. The N-terminal catalytic domain specifically recognizes the glutamate moiety of the substrate. The second domain is the NADPH-binding domain, and the third C-terminal domain is responsible for dimerization.</text>
</comment>
<comment type="miscellaneous">
    <text evidence="1">During catalysis, the active site Cys acts as a nucleophile attacking the alpha-carbonyl group of tRNA-bound glutamate with the formation of a thioester intermediate between enzyme and glutamate, and the concomitant release of tRNA(Glu). The thioester intermediate is finally reduced by direct hydride transfer from NADPH, to form the product GSA.</text>
</comment>
<comment type="similarity">
    <text evidence="1">Belongs to the glutamyl-tRNA reductase family.</text>
</comment>
<evidence type="ECO:0000255" key="1">
    <source>
        <dbReference type="HAMAP-Rule" id="MF_00087"/>
    </source>
</evidence>
<accession>Q5HVM4</accession>